<organism>
    <name type="scientific">Rhodopseudomonas palustris (strain BisB18)</name>
    <dbReference type="NCBI Taxonomy" id="316056"/>
    <lineage>
        <taxon>Bacteria</taxon>
        <taxon>Pseudomonadati</taxon>
        <taxon>Pseudomonadota</taxon>
        <taxon>Alphaproteobacteria</taxon>
        <taxon>Hyphomicrobiales</taxon>
        <taxon>Nitrobacteraceae</taxon>
        <taxon>Rhodopseudomonas</taxon>
    </lineage>
</organism>
<name>PURL_RHOPB</name>
<gene>
    <name evidence="1" type="primary">purL</name>
    <name type="ordered locus">RPC_1591</name>
</gene>
<evidence type="ECO:0000255" key="1">
    <source>
        <dbReference type="HAMAP-Rule" id="MF_00420"/>
    </source>
</evidence>
<dbReference type="EC" id="6.3.5.3" evidence="1"/>
<dbReference type="EMBL" id="CP000301">
    <property type="protein sequence ID" value="ABD87153.1"/>
    <property type="molecule type" value="Genomic_DNA"/>
</dbReference>
<dbReference type="SMR" id="Q218N3"/>
<dbReference type="STRING" id="316056.RPC_1591"/>
<dbReference type="KEGG" id="rpc:RPC_1591"/>
<dbReference type="eggNOG" id="COG0046">
    <property type="taxonomic scope" value="Bacteria"/>
</dbReference>
<dbReference type="HOGENOM" id="CLU_003100_0_1_5"/>
<dbReference type="OrthoDB" id="9804441at2"/>
<dbReference type="UniPathway" id="UPA00074">
    <property type="reaction ID" value="UER00128"/>
</dbReference>
<dbReference type="GO" id="GO:0005737">
    <property type="term" value="C:cytoplasm"/>
    <property type="evidence" value="ECO:0007669"/>
    <property type="project" value="UniProtKB-SubCell"/>
</dbReference>
<dbReference type="GO" id="GO:0005524">
    <property type="term" value="F:ATP binding"/>
    <property type="evidence" value="ECO:0007669"/>
    <property type="project" value="UniProtKB-UniRule"/>
</dbReference>
<dbReference type="GO" id="GO:0000287">
    <property type="term" value="F:magnesium ion binding"/>
    <property type="evidence" value="ECO:0007669"/>
    <property type="project" value="UniProtKB-UniRule"/>
</dbReference>
<dbReference type="GO" id="GO:0004642">
    <property type="term" value="F:phosphoribosylformylglycinamidine synthase activity"/>
    <property type="evidence" value="ECO:0007669"/>
    <property type="project" value="UniProtKB-UniRule"/>
</dbReference>
<dbReference type="GO" id="GO:0006189">
    <property type="term" value="P:'de novo' IMP biosynthetic process"/>
    <property type="evidence" value="ECO:0007669"/>
    <property type="project" value="UniProtKB-UniRule"/>
</dbReference>
<dbReference type="CDD" id="cd02203">
    <property type="entry name" value="PurL_repeat1"/>
    <property type="match status" value="1"/>
</dbReference>
<dbReference type="CDD" id="cd02204">
    <property type="entry name" value="PurL_repeat2"/>
    <property type="match status" value="1"/>
</dbReference>
<dbReference type="FunFam" id="3.30.1330.10:FF:000004">
    <property type="entry name" value="Phosphoribosylformylglycinamidine synthase subunit PurL"/>
    <property type="match status" value="1"/>
</dbReference>
<dbReference type="Gene3D" id="3.90.650.10">
    <property type="entry name" value="PurM-like C-terminal domain"/>
    <property type="match status" value="2"/>
</dbReference>
<dbReference type="Gene3D" id="3.30.1330.10">
    <property type="entry name" value="PurM-like, N-terminal domain"/>
    <property type="match status" value="2"/>
</dbReference>
<dbReference type="HAMAP" id="MF_00420">
    <property type="entry name" value="PurL_2"/>
    <property type="match status" value="1"/>
</dbReference>
<dbReference type="InterPro" id="IPR010074">
    <property type="entry name" value="PRibForGlyAmidine_synth_PurL"/>
</dbReference>
<dbReference type="InterPro" id="IPR041609">
    <property type="entry name" value="PurL_linker"/>
</dbReference>
<dbReference type="InterPro" id="IPR010918">
    <property type="entry name" value="PurM-like_C_dom"/>
</dbReference>
<dbReference type="InterPro" id="IPR036676">
    <property type="entry name" value="PurM-like_C_sf"/>
</dbReference>
<dbReference type="InterPro" id="IPR016188">
    <property type="entry name" value="PurM-like_N"/>
</dbReference>
<dbReference type="InterPro" id="IPR036921">
    <property type="entry name" value="PurM-like_N_sf"/>
</dbReference>
<dbReference type="NCBIfam" id="TIGR01736">
    <property type="entry name" value="FGAM_synth_II"/>
    <property type="match status" value="1"/>
</dbReference>
<dbReference type="NCBIfam" id="NF002290">
    <property type="entry name" value="PRK01213.1"/>
    <property type="match status" value="1"/>
</dbReference>
<dbReference type="PANTHER" id="PTHR43555">
    <property type="entry name" value="PHOSPHORIBOSYLFORMYLGLYCINAMIDINE SYNTHASE SUBUNIT PURL"/>
    <property type="match status" value="1"/>
</dbReference>
<dbReference type="PANTHER" id="PTHR43555:SF1">
    <property type="entry name" value="PHOSPHORIBOSYLFORMYLGLYCINAMIDINE SYNTHASE SUBUNIT PURL"/>
    <property type="match status" value="1"/>
</dbReference>
<dbReference type="Pfam" id="PF00586">
    <property type="entry name" value="AIRS"/>
    <property type="match status" value="2"/>
</dbReference>
<dbReference type="Pfam" id="PF02769">
    <property type="entry name" value="AIRS_C"/>
    <property type="match status" value="2"/>
</dbReference>
<dbReference type="Pfam" id="PF18072">
    <property type="entry name" value="FGAR-AT_linker"/>
    <property type="match status" value="1"/>
</dbReference>
<dbReference type="PIRSF" id="PIRSF001587">
    <property type="entry name" value="FGAM_synthase_II"/>
    <property type="match status" value="1"/>
</dbReference>
<dbReference type="SUPFAM" id="SSF56042">
    <property type="entry name" value="PurM C-terminal domain-like"/>
    <property type="match status" value="2"/>
</dbReference>
<dbReference type="SUPFAM" id="SSF55326">
    <property type="entry name" value="PurM N-terminal domain-like"/>
    <property type="match status" value="2"/>
</dbReference>
<comment type="function">
    <text evidence="1">Part of the phosphoribosylformylglycinamidine synthase complex involved in the purines biosynthetic pathway. Catalyzes the ATP-dependent conversion of formylglycinamide ribonucleotide (FGAR) and glutamine to yield formylglycinamidine ribonucleotide (FGAM) and glutamate. The FGAM synthase complex is composed of three subunits. PurQ produces an ammonia molecule by converting glutamine to glutamate. PurL transfers the ammonia molecule to FGAR to form FGAM in an ATP-dependent manner. PurS interacts with PurQ and PurL and is thought to assist in the transfer of the ammonia molecule from PurQ to PurL.</text>
</comment>
<comment type="catalytic activity">
    <reaction evidence="1">
        <text>N(2)-formyl-N(1)-(5-phospho-beta-D-ribosyl)glycinamide + L-glutamine + ATP + H2O = 2-formamido-N(1)-(5-O-phospho-beta-D-ribosyl)acetamidine + L-glutamate + ADP + phosphate + H(+)</text>
        <dbReference type="Rhea" id="RHEA:17129"/>
        <dbReference type="ChEBI" id="CHEBI:15377"/>
        <dbReference type="ChEBI" id="CHEBI:15378"/>
        <dbReference type="ChEBI" id="CHEBI:29985"/>
        <dbReference type="ChEBI" id="CHEBI:30616"/>
        <dbReference type="ChEBI" id="CHEBI:43474"/>
        <dbReference type="ChEBI" id="CHEBI:58359"/>
        <dbReference type="ChEBI" id="CHEBI:147286"/>
        <dbReference type="ChEBI" id="CHEBI:147287"/>
        <dbReference type="ChEBI" id="CHEBI:456216"/>
        <dbReference type="EC" id="6.3.5.3"/>
    </reaction>
</comment>
<comment type="pathway">
    <text evidence="1">Purine metabolism; IMP biosynthesis via de novo pathway; 5-amino-1-(5-phospho-D-ribosyl)imidazole from N(2)-formyl-N(1)-(5-phospho-D-ribosyl)glycinamide: step 1/2.</text>
</comment>
<comment type="subunit">
    <text evidence="1">Monomer. Part of the FGAM synthase complex composed of 1 PurL, 1 PurQ and 2 PurS subunits.</text>
</comment>
<comment type="subcellular location">
    <subcellularLocation>
        <location evidence="1">Cytoplasm</location>
    </subcellularLocation>
</comment>
<comment type="similarity">
    <text evidence="1">Belongs to the FGAMS family.</text>
</comment>
<feature type="chain" id="PRO_1000050343" description="Phosphoribosylformylglycinamidine synthase subunit PurL">
    <location>
        <begin position="1"/>
        <end position="736"/>
    </location>
</feature>
<feature type="active site" evidence="1">
    <location>
        <position position="49"/>
    </location>
</feature>
<feature type="active site" description="Proton acceptor" evidence="1">
    <location>
        <position position="95"/>
    </location>
</feature>
<feature type="binding site" evidence="1">
    <location>
        <position position="52"/>
    </location>
    <ligand>
        <name>ATP</name>
        <dbReference type="ChEBI" id="CHEBI:30616"/>
    </ligand>
</feature>
<feature type="binding site" evidence="1">
    <location>
        <position position="91"/>
    </location>
    <ligand>
        <name>ATP</name>
        <dbReference type="ChEBI" id="CHEBI:30616"/>
    </ligand>
</feature>
<feature type="binding site" evidence="1">
    <location>
        <position position="93"/>
    </location>
    <ligand>
        <name>Mg(2+)</name>
        <dbReference type="ChEBI" id="CHEBI:18420"/>
        <label>1</label>
    </ligand>
</feature>
<feature type="binding site" evidence="1">
    <location>
        <begin position="94"/>
        <end position="97"/>
    </location>
    <ligand>
        <name>substrate</name>
    </ligand>
</feature>
<feature type="binding site" evidence="1">
    <location>
        <position position="116"/>
    </location>
    <ligand>
        <name>substrate</name>
    </ligand>
</feature>
<feature type="binding site" evidence="1">
    <location>
        <position position="117"/>
    </location>
    <ligand>
        <name>Mg(2+)</name>
        <dbReference type="ChEBI" id="CHEBI:18420"/>
        <label>2</label>
    </ligand>
</feature>
<feature type="binding site" evidence="1">
    <location>
        <position position="240"/>
    </location>
    <ligand>
        <name>substrate</name>
    </ligand>
</feature>
<feature type="binding site" evidence="1">
    <location>
        <position position="268"/>
    </location>
    <ligand>
        <name>Mg(2+)</name>
        <dbReference type="ChEBI" id="CHEBI:18420"/>
        <label>2</label>
    </ligand>
</feature>
<feature type="binding site" evidence="1">
    <location>
        <begin position="312"/>
        <end position="314"/>
    </location>
    <ligand>
        <name>substrate</name>
    </ligand>
</feature>
<feature type="binding site" evidence="1">
    <location>
        <position position="493"/>
    </location>
    <ligand>
        <name>ATP</name>
        <dbReference type="ChEBI" id="CHEBI:30616"/>
    </ligand>
</feature>
<feature type="binding site" evidence="1">
    <location>
        <position position="530"/>
    </location>
    <ligand>
        <name>ATP</name>
        <dbReference type="ChEBI" id="CHEBI:30616"/>
    </ligand>
</feature>
<feature type="binding site" evidence="1">
    <location>
        <position position="531"/>
    </location>
    <ligand>
        <name>Mg(2+)</name>
        <dbReference type="ChEBI" id="CHEBI:18420"/>
        <label>1</label>
    </ligand>
</feature>
<feature type="binding site" evidence="1">
    <location>
        <position position="533"/>
    </location>
    <ligand>
        <name>substrate</name>
    </ligand>
</feature>
<proteinExistence type="inferred from homology"/>
<keyword id="KW-0067">ATP-binding</keyword>
<keyword id="KW-0963">Cytoplasm</keyword>
<keyword id="KW-0436">Ligase</keyword>
<keyword id="KW-0460">Magnesium</keyword>
<keyword id="KW-0479">Metal-binding</keyword>
<keyword id="KW-0547">Nucleotide-binding</keyword>
<keyword id="KW-0658">Purine biosynthesis</keyword>
<accession>Q218N3</accession>
<sequence>MSSKPTPITPELVASHGLKPDEYQRILKLIGREPSLTELGIFSAMWNEHCSYKSSRLHLKGLPTKAPWVLQGPGENAGVIDIGDNEAIVFKMESHNHPSFIEPYQGAATGVGGILRDVFTMGARPIACLNALSFGAPEHPKTRHLVSGVVAGVGGYGNSFGVPTVGGQVRFDTRYDGNILVNAMAVGLADADKIFLAAASGVGMPIVYLGSKTGRDGIHGASMASAVFDDDSAEKRPTVQVGDPFAEKLLLEACLEIMAADCVIAIQDMGAAGLTSSAVEMGAKGNLGVDLDLDKVPTREPGMTAYEMMLSESQERMLMVLKPEKEREAEAIFKKWGLDFAIVGHTTPTLRFVVKHGGEVKADLPIKELGDEAPLYDRPHVETPKLPIIHARDIKPPIGVVEALEKLIGSPELCSRRWVWEQYDHVIGGNTVQRPGGDAAVVRIKDGPKGLALTVDVTPRYCEADPYEGGKQAVAEAYRNITAVGGKPLAITDNLNFGNPERPEIMGQLVGCLKGIAEACVALEAPIVSGNVSLYNETNGRGILPTPSIGGVGLLDDFTKSATLAFKAAGEAILLIGETRGWLGQSVYLRDICGREEGAPPPVNLDAEKRNGTVVRGMIHSGTATAVHDLSDGGLLIALAEMAIAGHIGAALDAGPEAIVPHAWWFGEDQARYLVTVPADELLGVLTKLKAVGVPCLQIGKTAGHTLSIAGERAIDIKALEHAHEAWLPNYMGGKA</sequence>
<protein>
    <recommendedName>
        <fullName evidence="1">Phosphoribosylformylglycinamidine synthase subunit PurL</fullName>
        <shortName evidence="1">FGAM synthase</shortName>
        <ecNumber evidence="1">6.3.5.3</ecNumber>
    </recommendedName>
    <alternativeName>
        <fullName evidence="1">Formylglycinamide ribonucleotide amidotransferase subunit II</fullName>
        <shortName evidence="1">FGAR amidotransferase II</shortName>
        <shortName evidence="1">FGAR-AT II</shortName>
    </alternativeName>
    <alternativeName>
        <fullName evidence="1">Glutamine amidotransferase PurL</fullName>
    </alternativeName>
    <alternativeName>
        <fullName evidence="1">Phosphoribosylformylglycinamidine synthase subunit II</fullName>
    </alternativeName>
</protein>
<reference key="1">
    <citation type="submission" date="2006-03" db="EMBL/GenBank/DDBJ databases">
        <title>Complete sequence of Rhodopseudomonas palustris BisB18.</title>
        <authorList>
            <consortium name="US DOE Joint Genome Institute"/>
            <person name="Copeland A."/>
            <person name="Lucas S."/>
            <person name="Lapidus A."/>
            <person name="Barry K."/>
            <person name="Detter J.C."/>
            <person name="Glavina del Rio T."/>
            <person name="Hammon N."/>
            <person name="Israni S."/>
            <person name="Dalin E."/>
            <person name="Tice H."/>
            <person name="Pitluck S."/>
            <person name="Chain P."/>
            <person name="Malfatti S."/>
            <person name="Shin M."/>
            <person name="Vergez L."/>
            <person name="Schmutz J."/>
            <person name="Larimer F."/>
            <person name="Land M."/>
            <person name="Hauser L."/>
            <person name="Pelletier D.A."/>
            <person name="Kyrpides N."/>
            <person name="Anderson I."/>
            <person name="Oda Y."/>
            <person name="Harwood C.S."/>
            <person name="Richardson P."/>
        </authorList>
    </citation>
    <scope>NUCLEOTIDE SEQUENCE [LARGE SCALE GENOMIC DNA]</scope>
    <source>
        <strain>BisB18</strain>
    </source>
</reference>